<keyword id="KW-1003">Cell membrane</keyword>
<keyword id="KW-0204">Cytolysis</keyword>
<keyword id="KW-0472">Membrane</keyword>
<keyword id="KW-0812">Transmembrane</keyword>
<keyword id="KW-1133">Transmembrane helix</keyword>
<sequence>MSTKKVYSFLSQAFIFSAIMLISNIIATHLPIPMPSSVIGLVILFSLLCLKVIKLEQVESLGTALTGIIGFLFVPSGISVINSLGVMGQYFVQILTVIVVATVILLAVTGLFAQFILGKDEKETEDTKELKVVNKGRKHGKVA</sequence>
<gene>
    <name evidence="1" type="primary">lrgA</name>
    <name type="ordered locus">BAA_5720</name>
</gene>
<proteinExistence type="inferred from homology"/>
<feature type="chain" id="PRO_1000164096" description="Antiholin-like protein LrgA">
    <location>
        <begin position="1"/>
        <end position="143"/>
    </location>
</feature>
<feature type="transmembrane region" description="Helical" evidence="1">
    <location>
        <begin position="6"/>
        <end position="26"/>
    </location>
</feature>
<feature type="transmembrane region" description="Helical" evidence="1">
    <location>
        <begin position="30"/>
        <end position="50"/>
    </location>
</feature>
<feature type="transmembrane region" description="Helical" evidence="1">
    <location>
        <begin position="61"/>
        <end position="81"/>
    </location>
</feature>
<feature type="transmembrane region" description="Helical" evidence="1">
    <location>
        <begin position="97"/>
        <end position="117"/>
    </location>
</feature>
<dbReference type="EMBL" id="CP001598">
    <property type="protein sequence ID" value="ACQ46497.1"/>
    <property type="molecule type" value="Genomic_DNA"/>
</dbReference>
<dbReference type="RefSeq" id="WP_000104901.1">
    <property type="nucleotide sequence ID" value="NC_012659.1"/>
</dbReference>
<dbReference type="SMR" id="C3P2J7"/>
<dbReference type="GeneID" id="93005686"/>
<dbReference type="KEGG" id="bai:BAA_5720"/>
<dbReference type="HOGENOM" id="CLU_113736_0_1_9"/>
<dbReference type="GO" id="GO:0005886">
    <property type="term" value="C:plasma membrane"/>
    <property type="evidence" value="ECO:0007669"/>
    <property type="project" value="UniProtKB-SubCell"/>
</dbReference>
<dbReference type="GO" id="GO:0019835">
    <property type="term" value="P:cytolysis"/>
    <property type="evidence" value="ECO:0007669"/>
    <property type="project" value="UniProtKB-UniRule"/>
</dbReference>
<dbReference type="GO" id="GO:0031640">
    <property type="term" value="P:killing of cells of another organism"/>
    <property type="evidence" value="ECO:0007669"/>
    <property type="project" value="UniProtKB-KW"/>
</dbReference>
<dbReference type="GO" id="GO:0012501">
    <property type="term" value="P:programmed cell death"/>
    <property type="evidence" value="ECO:0007669"/>
    <property type="project" value="UniProtKB-UniRule"/>
</dbReference>
<dbReference type="HAMAP" id="MF_01141">
    <property type="entry name" value="LrgA"/>
    <property type="match status" value="1"/>
</dbReference>
<dbReference type="InterPro" id="IPR023736">
    <property type="entry name" value="Antiholin-like_LrgA"/>
</dbReference>
<dbReference type="InterPro" id="IPR005538">
    <property type="entry name" value="LrgA/CidA"/>
</dbReference>
<dbReference type="NCBIfam" id="NF003155">
    <property type="entry name" value="PRK04125.1"/>
    <property type="match status" value="1"/>
</dbReference>
<dbReference type="PANTHER" id="PTHR33931:SF4">
    <property type="entry name" value="ANTIHOLIN-LIKE PROTEIN LRGA"/>
    <property type="match status" value="1"/>
</dbReference>
<dbReference type="PANTHER" id="PTHR33931">
    <property type="entry name" value="HOLIN-LIKE PROTEIN CIDA-RELATED"/>
    <property type="match status" value="1"/>
</dbReference>
<dbReference type="Pfam" id="PF03788">
    <property type="entry name" value="LrgA"/>
    <property type="match status" value="1"/>
</dbReference>
<name>LRGA_BACAA</name>
<protein>
    <recommendedName>
        <fullName evidence="1">Antiholin-like protein LrgA</fullName>
    </recommendedName>
</protein>
<reference key="1">
    <citation type="submission" date="2009-04" db="EMBL/GenBank/DDBJ databases">
        <title>Genome sequence of Bacillus anthracis A0248.</title>
        <authorList>
            <person name="Dodson R.J."/>
            <person name="Munk A.C."/>
            <person name="Bruce D."/>
            <person name="Detter C."/>
            <person name="Tapia R."/>
            <person name="Sutton G."/>
            <person name="Sims D."/>
            <person name="Brettin T."/>
        </authorList>
    </citation>
    <scope>NUCLEOTIDE SEQUENCE [LARGE SCALE GENOMIC DNA]</scope>
    <source>
        <strain>A0248</strain>
    </source>
</reference>
<comment type="function">
    <text evidence="1">Inhibits the expression or activity of extracellular murein hydrolases by interacting, possibly with LrgB, with the holin-like protein CidA. The LrgAB and CidA proteins may affect the proton motive force of the membrane. May be involved in programmed cell death (PCD), possibly triggering PCD in response to antibiotics and environmental stresses.</text>
</comment>
<comment type="subcellular location">
    <subcellularLocation>
        <location evidence="1">Cell membrane</location>
        <topology evidence="1">Multi-pass membrane protein</topology>
    </subcellularLocation>
</comment>
<comment type="similarity">
    <text evidence="1">Belongs to the CidA/LrgA family. LrgA subfamily.</text>
</comment>
<evidence type="ECO:0000255" key="1">
    <source>
        <dbReference type="HAMAP-Rule" id="MF_01141"/>
    </source>
</evidence>
<accession>C3P2J7</accession>
<organism>
    <name type="scientific">Bacillus anthracis (strain A0248)</name>
    <dbReference type="NCBI Taxonomy" id="592021"/>
    <lineage>
        <taxon>Bacteria</taxon>
        <taxon>Bacillati</taxon>
        <taxon>Bacillota</taxon>
        <taxon>Bacilli</taxon>
        <taxon>Bacillales</taxon>
        <taxon>Bacillaceae</taxon>
        <taxon>Bacillus</taxon>
        <taxon>Bacillus cereus group</taxon>
    </lineage>
</organism>